<evidence type="ECO:0000255" key="1">
    <source>
        <dbReference type="HAMAP-Rule" id="MF_00379"/>
    </source>
</evidence>
<evidence type="ECO:0000305" key="2"/>
<proteinExistence type="inferred from homology"/>
<accession>Q5GTT5</accession>
<gene>
    <name evidence="1" type="primary">mnmE</name>
    <name evidence="1" type="synonym">trmE</name>
    <name type="ordered locus">XOO4634</name>
</gene>
<dbReference type="EC" id="3.6.-.-" evidence="1"/>
<dbReference type="EMBL" id="AE013598">
    <property type="protein sequence ID" value="AAW77888.1"/>
    <property type="status" value="ALT_INIT"/>
    <property type="molecule type" value="Genomic_DNA"/>
</dbReference>
<dbReference type="SMR" id="Q5GTT5"/>
<dbReference type="STRING" id="291331.XOO4634"/>
<dbReference type="KEGG" id="xoo:XOO4634"/>
<dbReference type="PATRIC" id="fig|291331.8.peg.5145"/>
<dbReference type="HOGENOM" id="CLU_019624_4_1_6"/>
<dbReference type="Proteomes" id="UP000006735">
    <property type="component" value="Chromosome"/>
</dbReference>
<dbReference type="GO" id="GO:0005829">
    <property type="term" value="C:cytosol"/>
    <property type="evidence" value="ECO:0007669"/>
    <property type="project" value="TreeGrafter"/>
</dbReference>
<dbReference type="GO" id="GO:0005525">
    <property type="term" value="F:GTP binding"/>
    <property type="evidence" value="ECO:0007669"/>
    <property type="project" value="UniProtKB-UniRule"/>
</dbReference>
<dbReference type="GO" id="GO:0003924">
    <property type="term" value="F:GTPase activity"/>
    <property type="evidence" value="ECO:0007669"/>
    <property type="project" value="UniProtKB-UniRule"/>
</dbReference>
<dbReference type="GO" id="GO:0046872">
    <property type="term" value="F:metal ion binding"/>
    <property type="evidence" value="ECO:0007669"/>
    <property type="project" value="UniProtKB-KW"/>
</dbReference>
<dbReference type="GO" id="GO:0030488">
    <property type="term" value="P:tRNA methylation"/>
    <property type="evidence" value="ECO:0007669"/>
    <property type="project" value="TreeGrafter"/>
</dbReference>
<dbReference type="GO" id="GO:0002098">
    <property type="term" value="P:tRNA wobble uridine modification"/>
    <property type="evidence" value="ECO:0007669"/>
    <property type="project" value="TreeGrafter"/>
</dbReference>
<dbReference type="CDD" id="cd04164">
    <property type="entry name" value="trmE"/>
    <property type="match status" value="1"/>
</dbReference>
<dbReference type="CDD" id="cd14858">
    <property type="entry name" value="TrmE_N"/>
    <property type="match status" value="1"/>
</dbReference>
<dbReference type="FunFam" id="3.40.50.300:FF:001376">
    <property type="entry name" value="tRNA modification GTPase MnmE"/>
    <property type="match status" value="1"/>
</dbReference>
<dbReference type="Gene3D" id="3.40.50.300">
    <property type="entry name" value="P-loop containing nucleotide triphosphate hydrolases"/>
    <property type="match status" value="1"/>
</dbReference>
<dbReference type="Gene3D" id="3.30.1360.120">
    <property type="entry name" value="Probable tRNA modification gtpase trme, domain 1"/>
    <property type="match status" value="1"/>
</dbReference>
<dbReference type="Gene3D" id="1.20.120.430">
    <property type="entry name" value="tRNA modification GTPase MnmE domain 2"/>
    <property type="match status" value="1"/>
</dbReference>
<dbReference type="HAMAP" id="MF_00379">
    <property type="entry name" value="GTPase_MnmE"/>
    <property type="match status" value="1"/>
</dbReference>
<dbReference type="InterPro" id="IPR031168">
    <property type="entry name" value="G_TrmE"/>
</dbReference>
<dbReference type="InterPro" id="IPR006073">
    <property type="entry name" value="GTP-bd"/>
</dbReference>
<dbReference type="InterPro" id="IPR018948">
    <property type="entry name" value="GTP-bd_TrmE_N"/>
</dbReference>
<dbReference type="InterPro" id="IPR004520">
    <property type="entry name" value="GTPase_MnmE"/>
</dbReference>
<dbReference type="InterPro" id="IPR027368">
    <property type="entry name" value="MnmE_dom2"/>
</dbReference>
<dbReference type="InterPro" id="IPR025867">
    <property type="entry name" value="MnmE_helical"/>
</dbReference>
<dbReference type="InterPro" id="IPR027417">
    <property type="entry name" value="P-loop_NTPase"/>
</dbReference>
<dbReference type="InterPro" id="IPR005225">
    <property type="entry name" value="Small_GTP-bd"/>
</dbReference>
<dbReference type="InterPro" id="IPR027266">
    <property type="entry name" value="TrmE/GcvT_dom1"/>
</dbReference>
<dbReference type="NCBIfam" id="TIGR00450">
    <property type="entry name" value="mnmE_trmE_thdF"/>
    <property type="match status" value="1"/>
</dbReference>
<dbReference type="NCBIfam" id="NF003661">
    <property type="entry name" value="PRK05291.1-3"/>
    <property type="match status" value="1"/>
</dbReference>
<dbReference type="NCBIfam" id="TIGR00231">
    <property type="entry name" value="small_GTP"/>
    <property type="match status" value="1"/>
</dbReference>
<dbReference type="PANTHER" id="PTHR42714">
    <property type="entry name" value="TRNA MODIFICATION GTPASE GTPBP3"/>
    <property type="match status" value="1"/>
</dbReference>
<dbReference type="PANTHER" id="PTHR42714:SF2">
    <property type="entry name" value="TRNA MODIFICATION GTPASE GTPBP3, MITOCHONDRIAL"/>
    <property type="match status" value="1"/>
</dbReference>
<dbReference type="Pfam" id="PF01926">
    <property type="entry name" value="MMR_HSR1"/>
    <property type="match status" value="1"/>
</dbReference>
<dbReference type="Pfam" id="PF12631">
    <property type="entry name" value="MnmE_helical"/>
    <property type="match status" value="1"/>
</dbReference>
<dbReference type="Pfam" id="PF10396">
    <property type="entry name" value="TrmE_N"/>
    <property type="match status" value="1"/>
</dbReference>
<dbReference type="PRINTS" id="PR00326">
    <property type="entry name" value="GTP1OBG"/>
</dbReference>
<dbReference type="SUPFAM" id="SSF52540">
    <property type="entry name" value="P-loop containing nucleoside triphosphate hydrolases"/>
    <property type="match status" value="1"/>
</dbReference>
<dbReference type="PROSITE" id="PS51709">
    <property type="entry name" value="G_TRME"/>
    <property type="match status" value="1"/>
</dbReference>
<keyword id="KW-0963">Cytoplasm</keyword>
<keyword id="KW-0342">GTP-binding</keyword>
<keyword id="KW-0378">Hydrolase</keyword>
<keyword id="KW-0460">Magnesium</keyword>
<keyword id="KW-0479">Metal-binding</keyword>
<keyword id="KW-0547">Nucleotide-binding</keyword>
<keyword id="KW-0630">Potassium</keyword>
<keyword id="KW-1185">Reference proteome</keyword>
<keyword id="KW-0819">tRNA processing</keyword>
<protein>
    <recommendedName>
        <fullName evidence="1">tRNA modification GTPase MnmE</fullName>
        <ecNumber evidence="1">3.6.-.-</ecNumber>
    </recommendedName>
</protein>
<sequence length="446" mass="47511">MSSSTSTIVAIASAAGTGGVGIVRLSGPQSRQIAVQLGVARLQPRHAHYARFRDAQGAVIDDGIALWFNAPHSFTGEDVVELQGHGSPVLLRQLVARCIELGARQARAGEFSERAFLNGKLDLAQAEAIADVIAAGDLRAARAARRALDGVFSRRVDAVAHTLTRLRIHVEAAIDFADEPLDTLGGNQVRDGLTQARTLLAQLLRDAERGRTLRDGLHAVLIGPPNAGKSSLLNALAGSERAIVTDVAGTTRDTLHEAIQLDGFELTLVDTAGLRDGGDAIEREGMRRARAELERADLALVVLDARDPQAARAAIGDAIDAVPRQLWIHNKCDLLSDAAPLDVNAIAVSAVTGQGLEQLHIRLRELALGDGVESVDGEFSARTRHVEALRRAERHVDAADLELGFEQLELAAEELRLAHEALGEITGKISADDLLGKIFSSFCIGK</sequence>
<organism>
    <name type="scientific">Xanthomonas oryzae pv. oryzae (strain KACC10331 / KXO85)</name>
    <dbReference type="NCBI Taxonomy" id="291331"/>
    <lineage>
        <taxon>Bacteria</taxon>
        <taxon>Pseudomonadati</taxon>
        <taxon>Pseudomonadota</taxon>
        <taxon>Gammaproteobacteria</taxon>
        <taxon>Lysobacterales</taxon>
        <taxon>Lysobacteraceae</taxon>
        <taxon>Xanthomonas</taxon>
    </lineage>
</organism>
<feature type="chain" id="PRO_0000345942" description="tRNA modification GTPase MnmE">
    <location>
        <begin position="1"/>
        <end position="446"/>
    </location>
</feature>
<feature type="domain" description="TrmE-type G">
    <location>
        <begin position="216"/>
        <end position="368"/>
    </location>
</feature>
<feature type="binding site" evidence="1">
    <location>
        <position position="24"/>
    </location>
    <ligand>
        <name>(6S)-5-formyl-5,6,7,8-tetrahydrofolate</name>
        <dbReference type="ChEBI" id="CHEBI:57457"/>
    </ligand>
</feature>
<feature type="binding site" evidence="1">
    <location>
        <position position="81"/>
    </location>
    <ligand>
        <name>(6S)-5-formyl-5,6,7,8-tetrahydrofolate</name>
        <dbReference type="ChEBI" id="CHEBI:57457"/>
    </ligand>
</feature>
<feature type="binding site" evidence="1">
    <location>
        <position position="120"/>
    </location>
    <ligand>
        <name>(6S)-5-formyl-5,6,7,8-tetrahydrofolate</name>
        <dbReference type="ChEBI" id="CHEBI:57457"/>
    </ligand>
</feature>
<feature type="binding site" evidence="1">
    <location>
        <begin position="226"/>
        <end position="231"/>
    </location>
    <ligand>
        <name>GTP</name>
        <dbReference type="ChEBI" id="CHEBI:37565"/>
    </ligand>
</feature>
<feature type="binding site" evidence="1">
    <location>
        <position position="226"/>
    </location>
    <ligand>
        <name>K(+)</name>
        <dbReference type="ChEBI" id="CHEBI:29103"/>
    </ligand>
</feature>
<feature type="binding site" evidence="1">
    <location>
        <position position="230"/>
    </location>
    <ligand>
        <name>Mg(2+)</name>
        <dbReference type="ChEBI" id="CHEBI:18420"/>
    </ligand>
</feature>
<feature type="binding site" evidence="1">
    <location>
        <begin position="245"/>
        <end position="251"/>
    </location>
    <ligand>
        <name>GTP</name>
        <dbReference type="ChEBI" id="CHEBI:37565"/>
    </ligand>
</feature>
<feature type="binding site" evidence="1">
    <location>
        <position position="245"/>
    </location>
    <ligand>
        <name>K(+)</name>
        <dbReference type="ChEBI" id="CHEBI:29103"/>
    </ligand>
</feature>
<feature type="binding site" evidence="1">
    <location>
        <position position="247"/>
    </location>
    <ligand>
        <name>K(+)</name>
        <dbReference type="ChEBI" id="CHEBI:29103"/>
    </ligand>
</feature>
<feature type="binding site" evidence="1">
    <location>
        <position position="250"/>
    </location>
    <ligand>
        <name>K(+)</name>
        <dbReference type="ChEBI" id="CHEBI:29103"/>
    </ligand>
</feature>
<feature type="binding site" evidence="1">
    <location>
        <position position="251"/>
    </location>
    <ligand>
        <name>Mg(2+)</name>
        <dbReference type="ChEBI" id="CHEBI:18420"/>
    </ligand>
</feature>
<feature type="binding site" evidence="1">
    <location>
        <begin position="270"/>
        <end position="273"/>
    </location>
    <ligand>
        <name>GTP</name>
        <dbReference type="ChEBI" id="CHEBI:37565"/>
    </ligand>
</feature>
<feature type="binding site" evidence="1">
    <location>
        <position position="446"/>
    </location>
    <ligand>
        <name>(6S)-5-formyl-5,6,7,8-tetrahydrofolate</name>
        <dbReference type="ChEBI" id="CHEBI:57457"/>
    </ligand>
</feature>
<name>MNME_XANOR</name>
<reference key="1">
    <citation type="journal article" date="2005" name="Nucleic Acids Res.">
        <title>The genome sequence of Xanthomonas oryzae pathovar oryzae KACC10331, the bacterial blight pathogen of rice.</title>
        <authorList>
            <person name="Lee B.-M."/>
            <person name="Park Y.-J."/>
            <person name="Park D.-S."/>
            <person name="Kang H.-W."/>
            <person name="Kim J.-G."/>
            <person name="Song E.-S."/>
            <person name="Park I.-C."/>
            <person name="Yoon U.-H."/>
            <person name="Hahn J.-H."/>
            <person name="Koo B.-S."/>
            <person name="Lee G.-B."/>
            <person name="Kim H."/>
            <person name="Park H.-S."/>
            <person name="Yoon K.-O."/>
            <person name="Kim J.-H."/>
            <person name="Jung C.-H."/>
            <person name="Koh N.-H."/>
            <person name="Seo J.-S."/>
            <person name="Go S.-J."/>
        </authorList>
    </citation>
    <scope>NUCLEOTIDE SEQUENCE [LARGE SCALE GENOMIC DNA]</scope>
    <source>
        <strain>KACC10331 / KXO85</strain>
    </source>
</reference>
<comment type="function">
    <text evidence="1">Exhibits a very high intrinsic GTPase hydrolysis rate. Involved in the addition of a carboxymethylaminomethyl (cmnm) group at the wobble position (U34) of certain tRNAs, forming tRNA-cmnm(5)s(2)U34.</text>
</comment>
<comment type="cofactor">
    <cofactor evidence="1">
        <name>K(+)</name>
        <dbReference type="ChEBI" id="CHEBI:29103"/>
    </cofactor>
    <text evidence="1">Binds 1 potassium ion per subunit.</text>
</comment>
<comment type="subunit">
    <text evidence="1">Homodimer. Heterotetramer of two MnmE and two MnmG subunits.</text>
</comment>
<comment type="subcellular location">
    <subcellularLocation>
        <location evidence="1">Cytoplasm</location>
    </subcellularLocation>
</comment>
<comment type="similarity">
    <text evidence="1">Belongs to the TRAFAC class TrmE-Era-EngA-EngB-Septin-like GTPase superfamily. TrmE GTPase family.</text>
</comment>
<comment type="sequence caution" evidence="2">
    <conflict type="erroneous initiation">
        <sequence resource="EMBL-CDS" id="AAW77888"/>
    </conflict>
</comment>